<geneLocation type="chloroplast"/>
<name>RR18_AGRST</name>
<feature type="chain" id="PRO_0000276861" description="Small ribosomal subunit protein bS18c">
    <location>
        <begin position="1"/>
        <end position="169"/>
    </location>
</feature>
<feature type="region of interest" description="Disordered" evidence="2">
    <location>
        <begin position="1"/>
        <end position="61"/>
    </location>
</feature>
<feature type="compositionally biased region" description="Basic residues" evidence="2">
    <location>
        <begin position="27"/>
        <end position="55"/>
    </location>
</feature>
<sequence>MYTSKQPFLKSKQPFRKSKQTFNKSKQTFRKSKQTFRKFKQPFRKSKQPFRRRPRIGPGDRIDYRNMSLINRFISEQGKILSRRINRLTLKQQRLITLAIKQARILSFLPFRNYENEKQFQAQSISIITGSRPRKNRHIPQLTEKYNSNRNLRNYNQNLRNINRNLSSD</sequence>
<dbReference type="EMBL" id="EF115543">
    <property type="protein sequence ID" value="ABK79602.1"/>
    <property type="molecule type" value="Genomic_DNA"/>
</dbReference>
<dbReference type="RefSeq" id="YP_874758.1">
    <property type="nucleotide sequence ID" value="NC_008591.1"/>
</dbReference>
<dbReference type="SMR" id="A1EA30"/>
<dbReference type="GeneID" id="4525004"/>
<dbReference type="GO" id="GO:0009507">
    <property type="term" value="C:chloroplast"/>
    <property type="evidence" value="ECO:0007669"/>
    <property type="project" value="UniProtKB-SubCell"/>
</dbReference>
<dbReference type="GO" id="GO:0005763">
    <property type="term" value="C:mitochondrial small ribosomal subunit"/>
    <property type="evidence" value="ECO:0007669"/>
    <property type="project" value="TreeGrafter"/>
</dbReference>
<dbReference type="GO" id="GO:0070181">
    <property type="term" value="F:small ribosomal subunit rRNA binding"/>
    <property type="evidence" value="ECO:0007669"/>
    <property type="project" value="TreeGrafter"/>
</dbReference>
<dbReference type="GO" id="GO:0003735">
    <property type="term" value="F:structural constituent of ribosome"/>
    <property type="evidence" value="ECO:0007669"/>
    <property type="project" value="InterPro"/>
</dbReference>
<dbReference type="GO" id="GO:0006412">
    <property type="term" value="P:translation"/>
    <property type="evidence" value="ECO:0007669"/>
    <property type="project" value="UniProtKB-UniRule"/>
</dbReference>
<dbReference type="FunFam" id="4.10.640.10:FF:000002">
    <property type="entry name" value="30S ribosomal protein S18, chloroplastic"/>
    <property type="match status" value="1"/>
</dbReference>
<dbReference type="Gene3D" id="4.10.640.10">
    <property type="entry name" value="Ribosomal protein S18"/>
    <property type="match status" value="1"/>
</dbReference>
<dbReference type="HAMAP" id="MF_00270">
    <property type="entry name" value="Ribosomal_bS18"/>
    <property type="match status" value="1"/>
</dbReference>
<dbReference type="InterPro" id="IPR001648">
    <property type="entry name" value="Ribosomal_bS18"/>
</dbReference>
<dbReference type="InterPro" id="IPR018275">
    <property type="entry name" value="Ribosomal_bS18_CS"/>
</dbReference>
<dbReference type="InterPro" id="IPR036870">
    <property type="entry name" value="Ribosomal_bS18_sf"/>
</dbReference>
<dbReference type="NCBIfam" id="TIGR00165">
    <property type="entry name" value="S18"/>
    <property type="match status" value="1"/>
</dbReference>
<dbReference type="PANTHER" id="PTHR13479">
    <property type="entry name" value="30S RIBOSOMAL PROTEIN S18"/>
    <property type="match status" value="1"/>
</dbReference>
<dbReference type="PANTHER" id="PTHR13479:SF40">
    <property type="entry name" value="SMALL RIBOSOMAL SUBUNIT PROTEIN BS18M"/>
    <property type="match status" value="1"/>
</dbReference>
<dbReference type="Pfam" id="PF01084">
    <property type="entry name" value="Ribosomal_S18"/>
    <property type="match status" value="1"/>
</dbReference>
<dbReference type="PRINTS" id="PR00974">
    <property type="entry name" value="RIBOSOMALS18"/>
</dbReference>
<dbReference type="SUPFAM" id="SSF46911">
    <property type="entry name" value="Ribosomal protein S18"/>
    <property type="match status" value="1"/>
</dbReference>
<dbReference type="PROSITE" id="PS00057">
    <property type="entry name" value="RIBOSOMAL_S18"/>
    <property type="match status" value="1"/>
</dbReference>
<proteinExistence type="inferred from homology"/>
<gene>
    <name evidence="1" type="primary">rps18</name>
</gene>
<keyword id="KW-0150">Chloroplast</keyword>
<keyword id="KW-0934">Plastid</keyword>
<keyword id="KW-0687">Ribonucleoprotein</keyword>
<keyword id="KW-0689">Ribosomal protein</keyword>
<keyword id="KW-0694">RNA-binding</keyword>
<keyword id="KW-0699">rRNA-binding</keyword>
<reference key="1">
    <citation type="journal article" date="2007" name="Theor. Appl. Genet.">
        <title>Complete chloroplast genome sequences of Hordeum vulgare, Sorghum bicolor and Agrostis stolonifera, and comparative analyses with other grass genomes.</title>
        <authorList>
            <person name="Saski C."/>
            <person name="Lee S.-B."/>
            <person name="Fjellheim S."/>
            <person name="Guda C."/>
            <person name="Jansen R.K."/>
            <person name="Luo H."/>
            <person name="Tomkins J."/>
            <person name="Rognli O.A."/>
            <person name="Daniell H."/>
            <person name="Clarke J.L."/>
        </authorList>
    </citation>
    <scope>NUCLEOTIDE SEQUENCE [LARGE SCALE GENOMIC DNA]</scope>
    <source>
        <strain>cv. Penn A-4</strain>
    </source>
</reference>
<organism>
    <name type="scientific">Agrostis stolonifera</name>
    <name type="common">Creeping bentgrass</name>
    <dbReference type="NCBI Taxonomy" id="63632"/>
    <lineage>
        <taxon>Eukaryota</taxon>
        <taxon>Viridiplantae</taxon>
        <taxon>Streptophyta</taxon>
        <taxon>Embryophyta</taxon>
        <taxon>Tracheophyta</taxon>
        <taxon>Spermatophyta</taxon>
        <taxon>Magnoliopsida</taxon>
        <taxon>Liliopsida</taxon>
        <taxon>Poales</taxon>
        <taxon>Poaceae</taxon>
        <taxon>BOP clade</taxon>
        <taxon>Pooideae</taxon>
        <taxon>Poodae</taxon>
        <taxon>Poeae</taxon>
        <taxon>Poeae Chloroplast Group 1 (Aveneae type)</taxon>
        <taxon>Agrostidodinae</taxon>
        <taxon>Agrostidinae</taxon>
        <taxon>Agrostis</taxon>
    </lineage>
</organism>
<protein>
    <recommendedName>
        <fullName evidence="1">Small ribosomal subunit protein bS18c</fullName>
    </recommendedName>
    <alternativeName>
        <fullName evidence="3">30S ribosomal protein S18, chloroplastic</fullName>
    </alternativeName>
</protein>
<comment type="subunit">
    <text>Part of the 30S ribosomal subunit.</text>
</comment>
<comment type="subcellular location">
    <subcellularLocation>
        <location>Plastid</location>
        <location>Chloroplast</location>
    </subcellularLocation>
</comment>
<comment type="similarity">
    <text evidence="1">Belongs to the bacterial ribosomal protein bS18 family.</text>
</comment>
<evidence type="ECO:0000255" key="1">
    <source>
        <dbReference type="HAMAP-Rule" id="MF_00270"/>
    </source>
</evidence>
<evidence type="ECO:0000256" key="2">
    <source>
        <dbReference type="SAM" id="MobiDB-lite"/>
    </source>
</evidence>
<evidence type="ECO:0000305" key="3"/>
<accession>A1EA30</accession>